<keyword id="KW-1185">Reference proteome</keyword>
<keyword id="KW-0687">Ribonucleoprotein</keyword>
<keyword id="KW-0689">Ribosomal protein</keyword>
<keyword id="KW-0694">RNA-binding</keyword>
<keyword id="KW-0699">rRNA-binding</keyword>
<feature type="chain" id="PRO_1000143100" description="Small ribosomal subunit protein uS15">
    <location>
        <begin position="1"/>
        <end position="89"/>
    </location>
</feature>
<evidence type="ECO:0000255" key="1">
    <source>
        <dbReference type="HAMAP-Rule" id="MF_01343"/>
    </source>
</evidence>
<evidence type="ECO:0000305" key="2"/>
<dbReference type="EMBL" id="CP001291">
    <property type="protein sequence ID" value="ACK70105.1"/>
    <property type="molecule type" value="Genomic_DNA"/>
</dbReference>
<dbReference type="RefSeq" id="WP_012599049.1">
    <property type="nucleotide sequence ID" value="NC_011729.1"/>
</dbReference>
<dbReference type="SMR" id="B7KAZ5"/>
<dbReference type="STRING" id="65393.PCC7424_1667"/>
<dbReference type="KEGG" id="cyc:PCC7424_1667"/>
<dbReference type="eggNOG" id="COG0184">
    <property type="taxonomic scope" value="Bacteria"/>
</dbReference>
<dbReference type="HOGENOM" id="CLU_148518_0_0_3"/>
<dbReference type="OrthoDB" id="9799262at2"/>
<dbReference type="Proteomes" id="UP000002384">
    <property type="component" value="Chromosome"/>
</dbReference>
<dbReference type="GO" id="GO:0022627">
    <property type="term" value="C:cytosolic small ribosomal subunit"/>
    <property type="evidence" value="ECO:0007669"/>
    <property type="project" value="TreeGrafter"/>
</dbReference>
<dbReference type="GO" id="GO:0019843">
    <property type="term" value="F:rRNA binding"/>
    <property type="evidence" value="ECO:0007669"/>
    <property type="project" value="UniProtKB-UniRule"/>
</dbReference>
<dbReference type="GO" id="GO:0003735">
    <property type="term" value="F:structural constituent of ribosome"/>
    <property type="evidence" value="ECO:0007669"/>
    <property type="project" value="InterPro"/>
</dbReference>
<dbReference type="GO" id="GO:0006412">
    <property type="term" value="P:translation"/>
    <property type="evidence" value="ECO:0007669"/>
    <property type="project" value="UniProtKB-UniRule"/>
</dbReference>
<dbReference type="CDD" id="cd00353">
    <property type="entry name" value="Ribosomal_S15p_S13e"/>
    <property type="match status" value="1"/>
</dbReference>
<dbReference type="FunFam" id="1.10.287.10:FF:000002">
    <property type="entry name" value="30S ribosomal protein S15"/>
    <property type="match status" value="1"/>
</dbReference>
<dbReference type="Gene3D" id="6.10.250.3130">
    <property type="match status" value="1"/>
</dbReference>
<dbReference type="Gene3D" id="1.10.287.10">
    <property type="entry name" value="S15/NS1, RNA-binding"/>
    <property type="match status" value="1"/>
</dbReference>
<dbReference type="HAMAP" id="MF_01343_B">
    <property type="entry name" value="Ribosomal_uS15_B"/>
    <property type="match status" value="1"/>
</dbReference>
<dbReference type="InterPro" id="IPR000589">
    <property type="entry name" value="Ribosomal_uS15"/>
</dbReference>
<dbReference type="InterPro" id="IPR005290">
    <property type="entry name" value="Ribosomal_uS15_bac-type"/>
</dbReference>
<dbReference type="InterPro" id="IPR009068">
    <property type="entry name" value="uS15_NS1_RNA-bd_sf"/>
</dbReference>
<dbReference type="NCBIfam" id="TIGR00952">
    <property type="entry name" value="S15_bact"/>
    <property type="match status" value="1"/>
</dbReference>
<dbReference type="PANTHER" id="PTHR23321">
    <property type="entry name" value="RIBOSOMAL PROTEIN S15, BACTERIAL AND ORGANELLAR"/>
    <property type="match status" value="1"/>
</dbReference>
<dbReference type="PANTHER" id="PTHR23321:SF26">
    <property type="entry name" value="SMALL RIBOSOMAL SUBUNIT PROTEIN US15M"/>
    <property type="match status" value="1"/>
</dbReference>
<dbReference type="Pfam" id="PF00312">
    <property type="entry name" value="Ribosomal_S15"/>
    <property type="match status" value="1"/>
</dbReference>
<dbReference type="SMART" id="SM01387">
    <property type="entry name" value="Ribosomal_S15"/>
    <property type="match status" value="1"/>
</dbReference>
<dbReference type="SUPFAM" id="SSF47060">
    <property type="entry name" value="S15/NS1 RNA-binding domain"/>
    <property type="match status" value="1"/>
</dbReference>
<dbReference type="PROSITE" id="PS00362">
    <property type="entry name" value="RIBOSOMAL_S15"/>
    <property type="match status" value="1"/>
</dbReference>
<reference key="1">
    <citation type="journal article" date="2011" name="MBio">
        <title>Novel metabolic attributes of the genus Cyanothece, comprising a group of unicellular nitrogen-fixing Cyanobacteria.</title>
        <authorList>
            <person name="Bandyopadhyay A."/>
            <person name="Elvitigala T."/>
            <person name="Welsh E."/>
            <person name="Stockel J."/>
            <person name="Liberton M."/>
            <person name="Min H."/>
            <person name="Sherman L.A."/>
            <person name="Pakrasi H.B."/>
        </authorList>
    </citation>
    <scope>NUCLEOTIDE SEQUENCE [LARGE SCALE GENOMIC DNA]</scope>
    <source>
        <strain>PCC 7424</strain>
    </source>
</reference>
<name>RS15_GLOC7</name>
<sequence length="89" mass="10268">MALTQTRKQEIINQYQAHGTDTGSADLQVALLTERINQLTTHLQANPKDHASRRGLLQLIGRRRGLLSYIQKKDFQRYQDLIGRLGIRR</sequence>
<comment type="function">
    <text evidence="1">One of the primary rRNA binding proteins, it binds directly to 16S rRNA where it helps nucleate assembly of the platform of the 30S subunit by binding and bridging several RNA helices of the 16S rRNA.</text>
</comment>
<comment type="function">
    <text evidence="1">Forms an intersubunit bridge (bridge B4) with the 23S rRNA of the 50S subunit in the ribosome.</text>
</comment>
<comment type="subunit">
    <text evidence="1">Part of the 30S ribosomal subunit. Forms a bridge to the 50S subunit in the 70S ribosome, contacting the 23S rRNA.</text>
</comment>
<comment type="similarity">
    <text evidence="1">Belongs to the universal ribosomal protein uS15 family.</text>
</comment>
<accession>B7KAZ5</accession>
<proteinExistence type="inferred from homology"/>
<organism>
    <name type="scientific">Gloeothece citriformis (strain PCC 7424)</name>
    <name type="common">Cyanothece sp. (strain PCC 7424)</name>
    <dbReference type="NCBI Taxonomy" id="65393"/>
    <lineage>
        <taxon>Bacteria</taxon>
        <taxon>Bacillati</taxon>
        <taxon>Cyanobacteriota</taxon>
        <taxon>Cyanophyceae</taxon>
        <taxon>Oscillatoriophycideae</taxon>
        <taxon>Chroococcales</taxon>
        <taxon>Aphanothecaceae</taxon>
        <taxon>Gloeothece</taxon>
        <taxon>Gloeothece citriformis</taxon>
    </lineage>
</organism>
<gene>
    <name evidence="1" type="primary">rpsO</name>
    <name evidence="1" type="synonym">rps15</name>
    <name type="ordered locus">PCC7424_1667</name>
</gene>
<protein>
    <recommendedName>
        <fullName evidence="1">Small ribosomal subunit protein uS15</fullName>
    </recommendedName>
    <alternativeName>
        <fullName evidence="2">30S ribosomal protein S15</fullName>
    </alternativeName>
</protein>